<accession>P20538</accession>
<proteinExistence type="evidence at transcript level"/>
<organismHost>
    <name type="scientific">Homo sapiens</name>
    <name type="common">Human</name>
    <dbReference type="NCBI Taxonomy" id="9606"/>
</organismHost>
<evidence type="ECO:0000250" key="1"/>
<evidence type="ECO:0000250" key="2">
    <source>
        <dbReference type="UniProtKB" id="P07242"/>
    </source>
</evidence>
<evidence type="ECO:0000256" key="3">
    <source>
        <dbReference type="SAM" id="MobiDB-lite"/>
    </source>
</evidence>
<evidence type="ECO:0000305" key="4"/>
<feature type="chain" id="PRO_0000099203" description="Late transcription elongation factor OPG110">
    <location>
        <begin position="1"/>
        <end position="203"/>
    </location>
</feature>
<feature type="region of interest" description="Disordered" evidence="3">
    <location>
        <begin position="25"/>
        <end position="74"/>
    </location>
</feature>
<feature type="region of interest" description="Disordered" evidence="3">
    <location>
        <begin position="80"/>
        <end position="99"/>
    </location>
</feature>
<feature type="compositionally biased region" description="Basic and acidic residues" evidence="3">
    <location>
        <begin position="25"/>
        <end position="36"/>
    </location>
</feature>
<feature type="compositionally biased region" description="Basic residues" evidence="3">
    <location>
        <begin position="49"/>
        <end position="67"/>
    </location>
</feature>
<feature type="modified residue" description="Phosphothreonine" evidence="1">
    <location>
        <position position="84"/>
    </location>
</feature>
<feature type="modified residue" description="Phosphothreonine" evidence="1">
    <location>
        <position position="85"/>
    </location>
</feature>
<sequence>MAWSITNKADTSSFTKMAEIRAHLKNSAENKDKNEDIFPEDVIIPSTKPKTKRATTPRKPAATKRSTKKEEVEEEVVIEEYHQTTEKNSPSPGVGDIVESVAAVELDDSDGDDEPMVQVEAGKVNHSARSDLSDLKVATDNIVKDLKKIITRISAVSTVLEDVQAAGISRQFTSMTKAITTLSDLVTEGKSKVVRKKVKTCKK</sequence>
<protein>
    <recommendedName>
        <fullName>Late transcription elongation factor OPG110</fullName>
    </recommendedName>
    <alternativeName>
        <fullName>Viral late gene transcription factor 4</fullName>
        <shortName>VLTF-4</shortName>
    </alternativeName>
</protein>
<organism>
    <name type="scientific">Vaccinia virus (strain Copenhagen)</name>
    <name type="common">VACV</name>
    <dbReference type="NCBI Taxonomy" id="10249"/>
    <lineage>
        <taxon>Viruses</taxon>
        <taxon>Varidnaviria</taxon>
        <taxon>Bamfordvirae</taxon>
        <taxon>Nucleocytoviricota</taxon>
        <taxon>Pokkesviricetes</taxon>
        <taxon>Chitovirales</taxon>
        <taxon>Poxviridae</taxon>
        <taxon>Chordopoxvirinae</taxon>
        <taxon>Orthopoxvirus</taxon>
        <taxon>Vaccinia virus</taxon>
    </lineage>
</organism>
<dbReference type="EMBL" id="M35027">
    <property type="protein sequence ID" value="AAA48092.1"/>
    <property type="molecule type" value="Genomic_DNA"/>
</dbReference>
<dbReference type="PIR" id="E42514">
    <property type="entry name" value="E42514"/>
</dbReference>
<dbReference type="SMR" id="P20538"/>
<dbReference type="Proteomes" id="UP000008269">
    <property type="component" value="Segment"/>
</dbReference>
<dbReference type="GO" id="GO:0030430">
    <property type="term" value="C:host cell cytoplasm"/>
    <property type="evidence" value="ECO:0007669"/>
    <property type="project" value="UniProtKB-SubCell"/>
</dbReference>
<dbReference type="GO" id="GO:0019031">
    <property type="term" value="C:viral envelope"/>
    <property type="evidence" value="ECO:0007669"/>
    <property type="project" value="InterPro"/>
</dbReference>
<dbReference type="InterPro" id="IPR004966">
    <property type="entry name" value="Pox_Ag35"/>
</dbReference>
<dbReference type="Pfam" id="PF03286">
    <property type="entry name" value="Pox_Ag35"/>
    <property type="match status" value="1"/>
</dbReference>
<gene>
    <name type="primary">OPG110</name>
    <name type="ORF">H5R</name>
</gene>
<name>PG110_VACCC</name>
<reference key="1">
    <citation type="journal article" date="1990" name="Virology">
        <title>The complete DNA sequence of vaccinia virus.</title>
        <authorList>
            <person name="Goebel S.J."/>
            <person name="Johnson G.P."/>
            <person name="Perkus M.E."/>
            <person name="Davis S.W."/>
            <person name="Winslow J.P."/>
            <person name="Paoletti E."/>
        </authorList>
    </citation>
    <scope>NUCLEOTIDE SEQUENCE [LARGE SCALE GENOMIC DNA]</scope>
</reference>
<reference key="2">
    <citation type="journal article" date="1990" name="Virology">
        <title>Appendix to 'The complete DNA sequence of vaccinia virus'.</title>
        <authorList>
            <person name="Goebel S.J."/>
            <person name="Johnson G.P."/>
            <person name="Perkus M.E."/>
            <person name="Davis S.W."/>
            <person name="Winslow J.P."/>
            <person name="Paoletti E."/>
        </authorList>
    </citation>
    <scope>NUCLEOTIDE SEQUENCE [LARGE SCALE GENOMIC DNA]</scope>
</reference>
<comment type="function">
    <text evidence="2">Involved in the co-transcriptional or post-transcriptional endoribonucleolytic cleavage that generates sequence-homogeneous 3' ends during late transcription. Involved in postreplicative transcription elongation on intermediate and late genes. Also involved in DNA replication and in multiple steps of virion morphogenesis. Required both for inclusion of virosoplasm into crescents as well as for maturation of immature virions (IV) into mature virions (MV).</text>
</comment>
<comment type="subunit">
    <text evidence="2">Interacts with the DNA polymerase processivity factor A20. Interacts with B1R kinase. Interacts with the late transcription factors VLTF-1 and VLTF-3. Interacts with the late transcription elongation factor G2. Interacts with itself. Might be part of a transcription complex composed at least of G2, A18, and H5.</text>
</comment>
<comment type="subcellular location">
    <subcellularLocation>
        <location evidence="2">Virion</location>
    </subcellularLocation>
    <subcellularLocation>
        <location evidence="2">Host cytoplasm</location>
    </subcellularLocation>
    <text evidence="2">Early during viral infection, diffusely localizes within the cytoplasm. Following DNA replication, localizes specifically to virus factories.</text>
</comment>
<comment type="induction">
    <text>Constitutively expressed in abundance during viral replication.</text>
</comment>
<comment type="PTM">
    <text evidence="2">Phosphorylated at multiple sites. Phosphorylation is necessary for cleavage activity. Phosphorylated by the viral B1R and F10 kinases.</text>
</comment>
<comment type="similarity">
    <text evidence="4">Belongs to the orthopoxvirus OPG110 family.</text>
</comment>
<keyword id="KW-0251">Elongation factor</keyword>
<keyword id="KW-1035">Host cytoplasm</keyword>
<keyword id="KW-0597">Phosphoprotein</keyword>
<keyword id="KW-0648">Protein biosynthesis</keyword>
<keyword id="KW-1185">Reference proteome</keyword>
<keyword id="KW-0804">Transcription</keyword>
<keyword id="KW-0805">Transcription regulation</keyword>
<keyword id="KW-0946">Virion</keyword>